<sequence length="373" mass="42079">MAEQDYIFELRGVSKYFDDTCALENIDLQIRNGEFLTLLGPSGCGKTTILRLLSGFETPSSGDVILSGRVVNDVPPEQRQVNTVFQNYALFPHMTVRDNVGFGLKMQKRPKDEIARRVREALKMVHLEQFGDRKPARLSGGQQQRVAIARAVVNNPYVLLLDEPFSALDFKLRKKMQLEIKHLQRQLGITFVFVTHDQEEAFAMSDRVVVMNDGRIEQIGSPQEIYEEPANLYVARFVGDINILDGTITARRNGVLYDATLEGVPFPVQTGKQFETGDRVKVLLRPEDIRLHMMHDLPDGEYFTGAIEETVYKGATVDIVVRLDSPSEGQPGKQLLVAEFFNEDDEEINYTPGERVAVTWVNGWEVVLGDDGE</sequence>
<reference key="1">
    <citation type="journal article" date="2011" name="J. Bacteriol.">
        <title>Complete genome sequence and updated annotation of Desulfovibrio alaskensis G20.</title>
        <authorList>
            <person name="Hauser L.J."/>
            <person name="Land M.L."/>
            <person name="Brown S.D."/>
            <person name="Larimer F."/>
            <person name="Keller K.L."/>
            <person name="Rapp-Giles B.J."/>
            <person name="Price M.N."/>
            <person name="Lin M."/>
            <person name="Bruce D.C."/>
            <person name="Detter J.C."/>
            <person name="Tapia R."/>
            <person name="Han C.S."/>
            <person name="Goodwin L.A."/>
            <person name="Cheng J.F."/>
            <person name="Pitluck S."/>
            <person name="Copeland A."/>
            <person name="Lucas S."/>
            <person name="Nolan M."/>
            <person name="Lapidus A.L."/>
            <person name="Palumbo A.V."/>
            <person name="Wall J.D."/>
        </authorList>
    </citation>
    <scope>NUCLEOTIDE SEQUENCE [LARGE SCALE GENOMIC DNA]</scope>
    <source>
        <strain>ATCC BAA-1058 / DSM 17464 / G20</strain>
    </source>
</reference>
<dbReference type="EC" id="7.6.2.11" evidence="1"/>
<dbReference type="EMBL" id="CP000112">
    <property type="protein sequence ID" value="ABB40463.1"/>
    <property type="molecule type" value="Genomic_DNA"/>
</dbReference>
<dbReference type="RefSeq" id="WP_011369334.1">
    <property type="nucleotide sequence ID" value="NC_007519.1"/>
</dbReference>
<dbReference type="SMR" id="Q30V33"/>
<dbReference type="STRING" id="207559.Dde_3670"/>
<dbReference type="KEGG" id="dde:Dde_3670"/>
<dbReference type="eggNOG" id="COG3842">
    <property type="taxonomic scope" value="Bacteria"/>
</dbReference>
<dbReference type="HOGENOM" id="CLU_000604_1_1_7"/>
<dbReference type="Proteomes" id="UP000002710">
    <property type="component" value="Chromosome"/>
</dbReference>
<dbReference type="GO" id="GO:0043190">
    <property type="term" value="C:ATP-binding cassette (ABC) transporter complex"/>
    <property type="evidence" value="ECO:0007669"/>
    <property type="project" value="InterPro"/>
</dbReference>
<dbReference type="GO" id="GO:0015594">
    <property type="term" value="F:ABC-type putrescine transporter activity"/>
    <property type="evidence" value="ECO:0007669"/>
    <property type="project" value="InterPro"/>
</dbReference>
<dbReference type="GO" id="GO:0005524">
    <property type="term" value="F:ATP binding"/>
    <property type="evidence" value="ECO:0007669"/>
    <property type="project" value="UniProtKB-KW"/>
</dbReference>
<dbReference type="GO" id="GO:0016887">
    <property type="term" value="F:ATP hydrolysis activity"/>
    <property type="evidence" value="ECO:0007669"/>
    <property type="project" value="InterPro"/>
</dbReference>
<dbReference type="CDD" id="cd03300">
    <property type="entry name" value="ABC_PotA_N"/>
    <property type="match status" value="1"/>
</dbReference>
<dbReference type="FunFam" id="3.40.50.300:FF:000133">
    <property type="entry name" value="Spermidine/putrescine import ATP-binding protein PotA"/>
    <property type="match status" value="1"/>
</dbReference>
<dbReference type="Gene3D" id="2.40.50.100">
    <property type="match status" value="1"/>
</dbReference>
<dbReference type="Gene3D" id="3.40.50.300">
    <property type="entry name" value="P-loop containing nucleotide triphosphate hydrolases"/>
    <property type="match status" value="1"/>
</dbReference>
<dbReference type="InterPro" id="IPR003593">
    <property type="entry name" value="AAA+_ATPase"/>
</dbReference>
<dbReference type="InterPro" id="IPR050093">
    <property type="entry name" value="ABC_SmlMolc_Importer"/>
</dbReference>
<dbReference type="InterPro" id="IPR003439">
    <property type="entry name" value="ABC_transporter-like_ATP-bd"/>
</dbReference>
<dbReference type="InterPro" id="IPR017871">
    <property type="entry name" value="ABC_transporter-like_CS"/>
</dbReference>
<dbReference type="InterPro" id="IPR008995">
    <property type="entry name" value="Mo/tungstate-bd_C_term_dom"/>
</dbReference>
<dbReference type="InterPro" id="IPR027417">
    <property type="entry name" value="P-loop_NTPase"/>
</dbReference>
<dbReference type="InterPro" id="IPR005893">
    <property type="entry name" value="PotA-like"/>
</dbReference>
<dbReference type="InterPro" id="IPR017879">
    <property type="entry name" value="PotA_ATP-bd"/>
</dbReference>
<dbReference type="InterPro" id="IPR013611">
    <property type="entry name" value="Transp-assoc_OB_typ2"/>
</dbReference>
<dbReference type="NCBIfam" id="TIGR01187">
    <property type="entry name" value="potA"/>
    <property type="match status" value="1"/>
</dbReference>
<dbReference type="NCBIfam" id="NF006987">
    <property type="entry name" value="PRK09452.1"/>
    <property type="match status" value="1"/>
</dbReference>
<dbReference type="PANTHER" id="PTHR42781">
    <property type="entry name" value="SPERMIDINE/PUTRESCINE IMPORT ATP-BINDING PROTEIN POTA"/>
    <property type="match status" value="1"/>
</dbReference>
<dbReference type="PANTHER" id="PTHR42781:SF4">
    <property type="entry name" value="SPERMIDINE_PUTRESCINE IMPORT ATP-BINDING PROTEIN POTA"/>
    <property type="match status" value="1"/>
</dbReference>
<dbReference type="Pfam" id="PF00005">
    <property type="entry name" value="ABC_tran"/>
    <property type="match status" value="1"/>
</dbReference>
<dbReference type="Pfam" id="PF08402">
    <property type="entry name" value="TOBE_2"/>
    <property type="match status" value="1"/>
</dbReference>
<dbReference type="SMART" id="SM00382">
    <property type="entry name" value="AAA"/>
    <property type="match status" value="1"/>
</dbReference>
<dbReference type="SUPFAM" id="SSF50331">
    <property type="entry name" value="MOP-like"/>
    <property type="match status" value="1"/>
</dbReference>
<dbReference type="SUPFAM" id="SSF52540">
    <property type="entry name" value="P-loop containing nucleoside triphosphate hydrolases"/>
    <property type="match status" value="1"/>
</dbReference>
<dbReference type="PROSITE" id="PS00211">
    <property type="entry name" value="ABC_TRANSPORTER_1"/>
    <property type="match status" value="1"/>
</dbReference>
<dbReference type="PROSITE" id="PS50893">
    <property type="entry name" value="ABC_TRANSPORTER_2"/>
    <property type="match status" value="1"/>
</dbReference>
<dbReference type="PROSITE" id="PS51305">
    <property type="entry name" value="POTA"/>
    <property type="match status" value="1"/>
</dbReference>
<gene>
    <name evidence="1" type="primary">potA</name>
    <name type="ordered locus">Dde_3670</name>
</gene>
<comment type="function">
    <text evidence="1">Part of the ABC transporter complex PotABCD involved in spermidine/putrescine import. Responsible for energy coupling to the transport system.</text>
</comment>
<comment type="catalytic activity">
    <reaction evidence="1">
        <text>ATP + H2O + polyamine-[polyamine-binding protein]Side 1 = ADP + phosphate + polyamineSide 2 + [polyamine-binding protein]Side 1.</text>
        <dbReference type="EC" id="7.6.2.11"/>
    </reaction>
</comment>
<comment type="subunit">
    <text evidence="1">The complex is composed of two ATP-binding proteins (PotA), two transmembrane proteins (PotB and PotC) and a solute-binding protein (PotD).</text>
</comment>
<comment type="subcellular location">
    <subcellularLocation>
        <location evidence="1">Cell inner membrane</location>
        <topology evidence="1">Peripheral membrane protein</topology>
    </subcellularLocation>
</comment>
<comment type="similarity">
    <text evidence="1">Belongs to the ABC transporter superfamily. Spermidine/putrescine importer (TC 3.A.1.11.1) family.</text>
</comment>
<feature type="chain" id="PRO_0000286212" description="Spermidine/putrescine import ATP-binding protein PotA">
    <location>
        <begin position="1"/>
        <end position="373"/>
    </location>
</feature>
<feature type="domain" description="ABC transporter" evidence="1">
    <location>
        <begin position="8"/>
        <end position="238"/>
    </location>
</feature>
<feature type="binding site" evidence="1">
    <location>
        <begin position="40"/>
        <end position="47"/>
    </location>
    <ligand>
        <name>ATP</name>
        <dbReference type="ChEBI" id="CHEBI:30616"/>
    </ligand>
</feature>
<proteinExistence type="inferred from homology"/>
<keyword id="KW-0067">ATP-binding</keyword>
<keyword id="KW-0997">Cell inner membrane</keyword>
<keyword id="KW-1003">Cell membrane</keyword>
<keyword id="KW-0472">Membrane</keyword>
<keyword id="KW-0547">Nucleotide-binding</keyword>
<keyword id="KW-1185">Reference proteome</keyword>
<keyword id="KW-1278">Translocase</keyword>
<keyword id="KW-0813">Transport</keyword>
<name>POTA_OLEA2</name>
<accession>Q30V33</accession>
<protein>
    <recommendedName>
        <fullName evidence="1">Spermidine/putrescine import ATP-binding protein PotA</fullName>
        <ecNumber evidence="1">7.6.2.11</ecNumber>
    </recommendedName>
</protein>
<evidence type="ECO:0000255" key="1">
    <source>
        <dbReference type="HAMAP-Rule" id="MF_01726"/>
    </source>
</evidence>
<organism>
    <name type="scientific">Oleidesulfovibrio alaskensis (strain ATCC BAA-1058 / DSM 17464 / G20)</name>
    <name type="common">Desulfovibrio alaskensis</name>
    <dbReference type="NCBI Taxonomy" id="207559"/>
    <lineage>
        <taxon>Bacteria</taxon>
        <taxon>Pseudomonadati</taxon>
        <taxon>Thermodesulfobacteriota</taxon>
        <taxon>Desulfovibrionia</taxon>
        <taxon>Desulfovibrionales</taxon>
        <taxon>Desulfovibrionaceae</taxon>
        <taxon>Oleidesulfovibrio</taxon>
    </lineage>
</organism>